<dbReference type="EC" id="3.5.4.19" evidence="1"/>
<dbReference type="EMBL" id="CP000304">
    <property type="protein sequence ID" value="ABP78043.1"/>
    <property type="molecule type" value="Genomic_DNA"/>
</dbReference>
<dbReference type="RefSeq" id="WP_011911575.1">
    <property type="nucleotide sequence ID" value="NC_009434.1"/>
</dbReference>
<dbReference type="SMR" id="A4VGE2"/>
<dbReference type="GeneID" id="66819582"/>
<dbReference type="KEGG" id="psa:PST_0337"/>
<dbReference type="eggNOG" id="COG0139">
    <property type="taxonomic scope" value="Bacteria"/>
</dbReference>
<dbReference type="HOGENOM" id="CLU_048577_5_0_6"/>
<dbReference type="UniPathway" id="UPA00031">
    <property type="reaction ID" value="UER00008"/>
</dbReference>
<dbReference type="Proteomes" id="UP000000233">
    <property type="component" value="Chromosome"/>
</dbReference>
<dbReference type="GO" id="GO:0005737">
    <property type="term" value="C:cytoplasm"/>
    <property type="evidence" value="ECO:0007669"/>
    <property type="project" value="UniProtKB-SubCell"/>
</dbReference>
<dbReference type="GO" id="GO:0000287">
    <property type="term" value="F:magnesium ion binding"/>
    <property type="evidence" value="ECO:0007669"/>
    <property type="project" value="UniProtKB-UniRule"/>
</dbReference>
<dbReference type="GO" id="GO:0004635">
    <property type="term" value="F:phosphoribosyl-AMP cyclohydrolase activity"/>
    <property type="evidence" value="ECO:0007669"/>
    <property type="project" value="UniProtKB-UniRule"/>
</dbReference>
<dbReference type="GO" id="GO:0008270">
    <property type="term" value="F:zinc ion binding"/>
    <property type="evidence" value="ECO:0007669"/>
    <property type="project" value="UniProtKB-UniRule"/>
</dbReference>
<dbReference type="GO" id="GO:0000105">
    <property type="term" value="P:L-histidine biosynthetic process"/>
    <property type="evidence" value="ECO:0007669"/>
    <property type="project" value="UniProtKB-UniRule"/>
</dbReference>
<dbReference type="FunFam" id="3.10.20.810:FF:000001">
    <property type="entry name" value="Histidine biosynthesis bifunctional protein HisIE"/>
    <property type="match status" value="1"/>
</dbReference>
<dbReference type="Gene3D" id="3.10.20.810">
    <property type="entry name" value="Phosphoribosyl-AMP cyclohydrolase"/>
    <property type="match status" value="1"/>
</dbReference>
<dbReference type="HAMAP" id="MF_01021">
    <property type="entry name" value="HisI"/>
    <property type="match status" value="1"/>
</dbReference>
<dbReference type="InterPro" id="IPR026660">
    <property type="entry name" value="PRA-CH"/>
</dbReference>
<dbReference type="InterPro" id="IPR002496">
    <property type="entry name" value="PRib_AMP_CycHydrolase_dom"/>
</dbReference>
<dbReference type="InterPro" id="IPR038019">
    <property type="entry name" value="PRib_AMP_CycHydrolase_sf"/>
</dbReference>
<dbReference type="NCBIfam" id="NF000768">
    <property type="entry name" value="PRK00051.1"/>
    <property type="match status" value="1"/>
</dbReference>
<dbReference type="PANTHER" id="PTHR42945">
    <property type="entry name" value="HISTIDINE BIOSYNTHESIS BIFUNCTIONAL PROTEIN"/>
    <property type="match status" value="1"/>
</dbReference>
<dbReference type="PANTHER" id="PTHR42945:SF1">
    <property type="entry name" value="HISTIDINE BIOSYNTHESIS BIFUNCTIONAL PROTEIN HIS7"/>
    <property type="match status" value="1"/>
</dbReference>
<dbReference type="Pfam" id="PF01502">
    <property type="entry name" value="PRA-CH"/>
    <property type="match status" value="1"/>
</dbReference>
<dbReference type="SUPFAM" id="SSF141734">
    <property type="entry name" value="HisI-like"/>
    <property type="match status" value="1"/>
</dbReference>
<evidence type="ECO:0000255" key="1">
    <source>
        <dbReference type="HAMAP-Rule" id="MF_01021"/>
    </source>
</evidence>
<sequence>MNWLDEINWNADGLVPAIAQDHKTGRVLMMAWMNREALQLTAQENRAIYWSRSRGKLWRKGEESGHVQQLHELRLDCDADVIILMVEQIGGIACHTGRESCFYRVFENGAWKVVEPVLKDPHAIYAEHKHE</sequence>
<accession>A4VGE2</accession>
<reference key="1">
    <citation type="journal article" date="2008" name="Proc. Natl. Acad. Sci. U.S.A.">
        <title>Nitrogen fixation island and rhizosphere competence traits in the genome of root-associated Pseudomonas stutzeri A1501.</title>
        <authorList>
            <person name="Yan Y."/>
            <person name="Yang J."/>
            <person name="Dou Y."/>
            <person name="Chen M."/>
            <person name="Ping S."/>
            <person name="Peng J."/>
            <person name="Lu W."/>
            <person name="Zhang W."/>
            <person name="Yao Z."/>
            <person name="Li H."/>
            <person name="Liu W."/>
            <person name="He S."/>
            <person name="Geng L."/>
            <person name="Zhang X."/>
            <person name="Yang F."/>
            <person name="Yu H."/>
            <person name="Zhan Y."/>
            <person name="Li D."/>
            <person name="Lin Z."/>
            <person name="Wang Y."/>
            <person name="Elmerich C."/>
            <person name="Lin M."/>
            <person name="Jin Q."/>
        </authorList>
    </citation>
    <scope>NUCLEOTIDE SEQUENCE [LARGE SCALE GENOMIC DNA]</scope>
    <source>
        <strain>A1501</strain>
    </source>
</reference>
<comment type="function">
    <text evidence="1">Catalyzes the hydrolysis of the adenine ring of phosphoribosyl-AMP.</text>
</comment>
<comment type="catalytic activity">
    <reaction evidence="1">
        <text>1-(5-phospho-beta-D-ribosyl)-5'-AMP + H2O = 1-(5-phospho-beta-D-ribosyl)-5-[(5-phospho-beta-D-ribosylamino)methylideneamino]imidazole-4-carboxamide</text>
        <dbReference type="Rhea" id="RHEA:20049"/>
        <dbReference type="ChEBI" id="CHEBI:15377"/>
        <dbReference type="ChEBI" id="CHEBI:58435"/>
        <dbReference type="ChEBI" id="CHEBI:59457"/>
        <dbReference type="EC" id="3.5.4.19"/>
    </reaction>
</comment>
<comment type="cofactor">
    <cofactor evidence="1">
        <name>Mg(2+)</name>
        <dbReference type="ChEBI" id="CHEBI:18420"/>
    </cofactor>
    <text evidence="1">Binds 1 Mg(2+) ion per subunit.</text>
</comment>
<comment type="cofactor">
    <cofactor evidence="1">
        <name>Zn(2+)</name>
        <dbReference type="ChEBI" id="CHEBI:29105"/>
    </cofactor>
    <text evidence="1">Binds 1 zinc ion per subunit.</text>
</comment>
<comment type="pathway">
    <text evidence="1">Amino-acid biosynthesis; L-histidine biosynthesis; L-histidine from 5-phospho-alpha-D-ribose 1-diphosphate: step 3/9.</text>
</comment>
<comment type="subunit">
    <text evidence="1">Homodimer.</text>
</comment>
<comment type="subcellular location">
    <subcellularLocation>
        <location evidence="1">Cytoplasm</location>
    </subcellularLocation>
</comment>
<comment type="similarity">
    <text evidence="1">Belongs to the PRA-CH family.</text>
</comment>
<organism>
    <name type="scientific">Stutzerimonas stutzeri (strain A1501)</name>
    <name type="common">Pseudomonas stutzeri</name>
    <dbReference type="NCBI Taxonomy" id="379731"/>
    <lineage>
        <taxon>Bacteria</taxon>
        <taxon>Pseudomonadati</taxon>
        <taxon>Pseudomonadota</taxon>
        <taxon>Gammaproteobacteria</taxon>
        <taxon>Pseudomonadales</taxon>
        <taxon>Pseudomonadaceae</taxon>
        <taxon>Stutzerimonas</taxon>
    </lineage>
</organism>
<keyword id="KW-0028">Amino-acid biosynthesis</keyword>
<keyword id="KW-0963">Cytoplasm</keyword>
<keyword id="KW-0368">Histidine biosynthesis</keyword>
<keyword id="KW-0378">Hydrolase</keyword>
<keyword id="KW-0460">Magnesium</keyword>
<keyword id="KW-0479">Metal-binding</keyword>
<keyword id="KW-1185">Reference proteome</keyword>
<keyword id="KW-0862">Zinc</keyword>
<feature type="chain" id="PRO_0000319706" description="Phosphoribosyl-AMP cyclohydrolase">
    <location>
        <begin position="1"/>
        <end position="131"/>
    </location>
</feature>
<feature type="binding site" evidence="1">
    <location>
        <position position="76"/>
    </location>
    <ligand>
        <name>Mg(2+)</name>
        <dbReference type="ChEBI" id="CHEBI:18420"/>
    </ligand>
</feature>
<feature type="binding site" evidence="1">
    <location>
        <position position="77"/>
    </location>
    <ligand>
        <name>Zn(2+)</name>
        <dbReference type="ChEBI" id="CHEBI:29105"/>
        <note>ligand shared between dimeric partners</note>
    </ligand>
</feature>
<feature type="binding site" evidence="1">
    <location>
        <position position="78"/>
    </location>
    <ligand>
        <name>Mg(2+)</name>
        <dbReference type="ChEBI" id="CHEBI:18420"/>
    </ligand>
</feature>
<feature type="binding site" evidence="1">
    <location>
        <position position="80"/>
    </location>
    <ligand>
        <name>Mg(2+)</name>
        <dbReference type="ChEBI" id="CHEBI:18420"/>
    </ligand>
</feature>
<feature type="binding site" evidence="1">
    <location>
        <position position="94"/>
    </location>
    <ligand>
        <name>Zn(2+)</name>
        <dbReference type="ChEBI" id="CHEBI:29105"/>
        <note>ligand shared between dimeric partners</note>
    </ligand>
</feature>
<feature type="binding site" evidence="1">
    <location>
        <position position="101"/>
    </location>
    <ligand>
        <name>Zn(2+)</name>
        <dbReference type="ChEBI" id="CHEBI:29105"/>
        <note>ligand shared between dimeric partners</note>
    </ligand>
</feature>
<proteinExistence type="inferred from homology"/>
<protein>
    <recommendedName>
        <fullName evidence="1">Phosphoribosyl-AMP cyclohydrolase</fullName>
        <shortName evidence="1">PRA-CH</shortName>
        <ecNumber evidence="1">3.5.4.19</ecNumber>
    </recommendedName>
</protein>
<name>HIS3_STUS1</name>
<gene>
    <name evidence="1" type="primary">hisI</name>
    <name type="ordered locus">PST_0337</name>
</gene>